<reference key="1">
    <citation type="submission" date="2008-02" db="EMBL/GenBank/DDBJ databases">
        <title>Complete sequence of Pseudomonas putida W619.</title>
        <authorList>
            <person name="Copeland A."/>
            <person name="Lucas S."/>
            <person name="Lapidus A."/>
            <person name="Barry K."/>
            <person name="Detter J.C."/>
            <person name="Glavina del Rio T."/>
            <person name="Dalin E."/>
            <person name="Tice H."/>
            <person name="Pitluck S."/>
            <person name="Chain P."/>
            <person name="Malfatti S."/>
            <person name="Shin M."/>
            <person name="Vergez L."/>
            <person name="Schmutz J."/>
            <person name="Larimer F."/>
            <person name="Land M."/>
            <person name="Hauser L."/>
            <person name="Kyrpides N."/>
            <person name="Kim E."/>
            <person name="Taghavi S."/>
            <person name="Vangronsveld D."/>
            <person name="van der Lelie D."/>
            <person name="Richardson P."/>
        </authorList>
    </citation>
    <scope>NUCLEOTIDE SEQUENCE [LARGE SCALE GENOMIC DNA]</scope>
    <source>
        <strain>W619</strain>
    </source>
</reference>
<comment type="function">
    <text evidence="1">Catalyzes the NADPH-dependent reduction of L-glutamate 5-phosphate into L-glutamate 5-semialdehyde and phosphate. The product spontaneously undergoes cyclization to form 1-pyrroline-5-carboxylate.</text>
</comment>
<comment type="catalytic activity">
    <reaction evidence="1">
        <text>L-glutamate 5-semialdehyde + phosphate + NADP(+) = L-glutamyl 5-phosphate + NADPH + H(+)</text>
        <dbReference type="Rhea" id="RHEA:19541"/>
        <dbReference type="ChEBI" id="CHEBI:15378"/>
        <dbReference type="ChEBI" id="CHEBI:43474"/>
        <dbReference type="ChEBI" id="CHEBI:57783"/>
        <dbReference type="ChEBI" id="CHEBI:58066"/>
        <dbReference type="ChEBI" id="CHEBI:58274"/>
        <dbReference type="ChEBI" id="CHEBI:58349"/>
        <dbReference type="EC" id="1.2.1.41"/>
    </reaction>
</comment>
<comment type="pathway">
    <text evidence="1">Amino-acid biosynthesis; L-proline biosynthesis; L-glutamate 5-semialdehyde from L-glutamate: step 2/2.</text>
</comment>
<comment type="subcellular location">
    <subcellularLocation>
        <location evidence="1">Cytoplasm</location>
    </subcellularLocation>
</comment>
<comment type="similarity">
    <text evidence="1">Belongs to the gamma-glutamyl phosphate reductase family.</text>
</comment>
<sequence length="423" mass="45584">MTESVLDYMTRLGRAARQASRVIARASTAQKNRALQAAADALDAARAELAAANEQDLAAGRANGLEPALLDRLALTPARIDGMITGLRQVASLPDPVGAIRDMSYRPSGIQVGKMRVPLGVIGIIYESRPNVTIDAASLCLKSGNATILRGGSEAIHSNRAIATCIQRGLAEAGLPAAVVQVVETTDREAVGALISMPEFVDVIVPRGGRGLIERISRDARVPVIKHLDGICHVYVAEHADLDKGWRVAFNAKTYRYGICGAMETLLVDQRVAEGFLPEMARRFQEKGVELRGCERTRALIEAKPASEDDWHTEYLDAILSIRVVDGLDQAIEHINHYGSHHTDSIITEHQGQARQFMAEVDSASVMLNTPTCFADGFEYGLGAEIGISTDKLHARGPVGLEGLTCEKYVVIGDGQLRGQESC</sequence>
<dbReference type="EC" id="1.2.1.41" evidence="1"/>
<dbReference type="EMBL" id="CP000949">
    <property type="protein sequence ID" value="ACA71115.1"/>
    <property type="molecule type" value="Genomic_DNA"/>
</dbReference>
<dbReference type="SMR" id="B1J133"/>
<dbReference type="STRING" id="390235.PputW619_0610"/>
<dbReference type="KEGG" id="ppw:PputW619_0610"/>
<dbReference type="eggNOG" id="COG0014">
    <property type="taxonomic scope" value="Bacteria"/>
</dbReference>
<dbReference type="HOGENOM" id="CLU_030231_0_0_6"/>
<dbReference type="OrthoDB" id="9809970at2"/>
<dbReference type="UniPathway" id="UPA00098">
    <property type="reaction ID" value="UER00360"/>
</dbReference>
<dbReference type="GO" id="GO:0005737">
    <property type="term" value="C:cytoplasm"/>
    <property type="evidence" value="ECO:0007669"/>
    <property type="project" value="UniProtKB-SubCell"/>
</dbReference>
<dbReference type="GO" id="GO:0004350">
    <property type="term" value="F:glutamate-5-semialdehyde dehydrogenase activity"/>
    <property type="evidence" value="ECO:0007669"/>
    <property type="project" value="UniProtKB-UniRule"/>
</dbReference>
<dbReference type="GO" id="GO:0050661">
    <property type="term" value="F:NADP binding"/>
    <property type="evidence" value="ECO:0007669"/>
    <property type="project" value="InterPro"/>
</dbReference>
<dbReference type="GO" id="GO:0055129">
    <property type="term" value="P:L-proline biosynthetic process"/>
    <property type="evidence" value="ECO:0007669"/>
    <property type="project" value="UniProtKB-UniRule"/>
</dbReference>
<dbReference type="CDD" id="cd07079">
    <property type="entry name" value="ALDH_F18-19_ProA-GPR"/>
    <property type="match status" value="1"/>
</dbReference>
<dbReference type="FunFam" id="3.40.309.10:FF:000006">
    <property type="entry name" value="Gamma-glutamyl phosphate reductase"/>
    <property type="match status" value="1"/>
</dbReference>
<dbReference type="Gene3D" id="3.40.605.10">
    <property type="entry name" value="Aldehyde Dehydrogenase, Chain A, domain 1"/>
    <property type="match status" value="1"/>
</dbReference>
<dbReference type="Gene3D" id="3.40.309.10">
    <property type="entry name" value="Aldehyde Dehydrogenase, Chain A, domain 2"/>
    <property type="match status" value="1"/>
</dbReference>
<dbReference type="HAMAP" id="MF_00412">
    <property type="entry name" value="ProA"/>
    <property type="match status" value="1"/>
</dbReference>
<dbReference type="InterPro" id="IPR016161">
    <property type="entry name" value="Ald_DH/histidinol_DH"/>
</dbReference>
<dbReference type="InterPro" id="IPR016163">
    <property type="entry name" value="Ald_DH_C"/>
</dbReference>
<dbReference type="InterPro" id="IPR016162">
    <property type="entry name" value="Ald_DH_N"/>
</dbReference>
<dbReference type="InterPro" id="IPR015590">
    <property type="entry name" value="Aldehyde_DH_dom"/>
</dbReference>
<dbReference type="InterPro" id="IPR020593">
    <property type="entry name" value="G-glutamylP_reductase_CS"/>
</dbReference>
<dbReference type="InterPro" id="IPR012134">
    <property type="entry name" value="Glu-5-SA_DH"/>
</dbReference>
<dbReference type="InterPro" id="IPR000965">
    <property type="entry name" value="GPR_dom"/>
</dbReference>
<dbReference type="NCBIfam" id="NF001221">
    <property type="entry name" value="PRK00197.1"/>
    <property type="match status" value="1"/>
</dbReference>
<dbReference type="NCBIfam" id="TIGR00407">
    <property type="entry name" value="proA"/>
    <property type="match status" value="1"/>
</dbReference>
<dbReference type="PANTHER" id="PTHR11063:SF8">
    <property type="entry name" value="DELTA-1-PYRROLINE-5-CARBOXYLATE SYNTHASE"/>
    <property type="match status" value="1"/>
</dbReference>
<dbReference type="PANTHER" id="PTHR11063">
    <property type="entry name" value="GLUTAMATE SEMIALDEHYDE DEHYDROGENASE"/>
    <property type="match status" value="1"/>
</dbReference>
<dbReference type="Pfam" id="PF00171">
    <property type="entry name" value="Aldedh"/>
    <property type="match status" value="1"/>
</dbReference>
<dbReference type="PIRSF" id="PIRSF000151">
    <property type="entry name" value="GPR"/>
    <property type="match status" value="1"/>
</dbReference>
<dbReference type="SUPFAM" id="SSF53720">
    <property type="entry name" value="ALDH-like"/>
    <property type="match status" value="1"/>
</dbReference>
<dbReference type="PROSITE" id="PS01223">
    <property type="entry name" value="PROA"/>
    <property type="match status" value="1"/>
</dbReference>
<proteinExistence type="inferred from homology"/>
<name>PROA_PSEPW</name>
<feature type="chain" id="PRO_1000193638" description="Gamma-glutamyl phosphate reductase">
    <location>
        <begin position="1"/>
        <end position="423"/>
    </location>
</feature>
<evidence type="ECO:0000255" key="1">
    <source>
        <dbReference type="HAMAP-Rule" id="MF_00412"/>
    </source>
</evidence>
<keyword id="KW-0028">Amino-acid biosynthesis</keyword>
<keyword id="KW-0963">Cytoplasm</keyword>
<keyword id="KW-0521">NADP</keyword>
<keyword id="KW-0560">Oxidoreductase</keyword>
<keyword id="KW-0641">Proline biosynthesis</keyword>
<gene>
    <name evidence="1" type="primary">proA</name>
    <name type="ordered locus">PputW619_0610</name>
</gene>
<accession>B1J133</accession>
<organism>
    <name type="scientific">Pseudomonas putida (strain W619)</name>
    <dbReference type="NCBI Taxonomy" id="390235"/>
    <lineage>
        <taxon>Bacteria</taxon>
        <taxon>Pseudomonadati</taxon>
        <taxon>Pseudomonadota</taxon>
        <taxon>Gammaproteobacteria</taxon>
        <taxon>Pseudomonadales</taxon>
        <taxon>Pseudomonadaceae</taxon>
        <taxon>Pseudomonas</taxon>
    </lineage>
</organism>
<protein>
    <recommendedName>
        <fullName evidence="1">Gamma-glutamyl phosphate reductase</fullName>
        <shortName evidence="1">GPR</shortName>
        <ecNumber evidence="1">1.2.1.41</ecNumber>
    </recommendedName>
    <alternativeName>
        <fullName evidence="1">Glutamate-5-semialdehyde dehydrogenase</fullName>
    </alternativeName>
    <alternativeName>
        <fullName evidence="1">Glutamyl-gamma-semialdehyde dehydrogenase</fullName>
        <shortName evidence="1">GSA dehydrogenase</shortName>
    </alternativeName>
</protein>